<reference key="1">
    <citation type="submission" date="2003-03" db="EMBL/GenBank/DDBJ databases">
        <title>The complete genome sequence of Neisseria gonorrhoeae.</title>
        <authorList>
            <person name="Lewis L.A."/>
            <person name="Gillaspy A.F."/>
            <person name="McLaughlin R.E."/>
            <person name="Gipson M."/>
            <person name="Ducey T.F."/>
            <person name="Ownbey T."/>
            <person name="Hartman K."/>
            <person name="Nydick C."/>
            <person name="Carson M.B."/>
            <person name="Vaughn J."/>
            <person name="Thomson C."/>
            <person name="Song L."/>
            <person name="Lin S."/>
            <person name="Yuan X."/>
            <person name="Najar F."/>
            <person name="Zhan M."/>
            <person name="Ren Q."/>
            <person name="Zhu H."/>
            <person name="Qi S."/>
            <person name="Kenton S.M."/>
            <person name="Lai H."/>
            <person name="White J.D."/>
            <person name="Clifton S."/>
            <person name="Roe B.A."/>
            <person name="Dyer D.W."/>
        </authorList>
    </citation>
    <scope>NUCLEOTIDE SEQUENCE [LARGE SCALE GENOMIC DNA]</scope>
    <source>
        <strain>ATCC 700825 / FA 1090</strain>
    </source>
</reference>
<feature type="chain" id="PRO_0000226856" description="Large ribosomal subunit protein bL19">
    <location>
        <begin position="1"/>
        <end position="121"/>
    </location>
</feature>
<sequence>MNLIQQLEQEEIARLNKEIPEFAPGDTVVVSVRVVEGTRSRLQAYEGVVIARRNRGLNSNFIVRKISSGEGVERTFQLYSPTVEKIEVKRRGDVRRAKLYYLRGLTGKAARIKEKLPARKG</sequence>
<comment type="function">
    <text evidence="1">This protein is located at the 30S-50S ribosomal subunit interface and may play a role in the structure and function of the aminoacyl-tRNA binding site.</text>
</comment>
<comment type="similarity">
    <text evidence="1">Belongs to the bacterial ribosomal protein bL19 family.</text>
</comment>
<organism>
    <name type="scientific">Neisseria gonorrhoeae (strain ATCC 700825 / FA 1090)</name>
    <dbReference type="NCBI Taxonomy" id="242231"/>
    <lineage>
        <taxon>Bacteria</taxon>
        <taxon>Pseudomonadati</taxon>
        <taxon>Pseudomonadota</taxon>
        <taxon>Betaproteobacteria</taxon>
        <taxon>Neisseriales</taxon>
        <taxon>Neisseriaceae</taxon>
        <taxon>Neisseria</taxon>
    </lineage>
</organism>
<evidence type="ECO:0000255" key="1">
    <source>
        <dbReference type="HAMAP-Rule" id="MF_00402"/>
    </source>
</evidence>
<evidence type="ECO:0000305" key="2"/>
<gene>
    <name evidence="1" type="primary">rplS</name>
    <name type="ordered locus">NGO_0171</name>
</gene>
<protein>
    <recommendedName>
        <fullName evidence="1">Large ribosomal subunit protein bL19</fullName>
    </recommendedName>
    <alternativeName>
        <fullName evidence="2">50S ribosomal protein L19</fullName>
    </alternativeName>
</protein>
<keyword id="KW-1185">Reference proteome</keyword>
<keyword id="KW-0687">Ribonucleoprotein</keyword>
<keyword id="KW-0689">Ribosomal protein</keyword>
<accession>Q5FA60</accession>
<name>RL19_NEIG1</name>
<dbReference type="EMBL" id="AE004969">
    <property type="protein sequence ID" value="AAW88927.1"/>
    <property type="molecule type" value="Genomic_DNA"/>
</dbReference>
<dbReference type="RefSeq" id="WP_002217809.1">
    <property type="nucleotide sequence ID" value="NC_002946.2"/>
</dbReference>
<dbReference type="RefSeq" id="YP_207339.1">
    <property type="nucleotide sequence ID" value="NC_002946.2"/>
</dbReference>
<dbReference type="SMR" id="Q5FA60"/>
<dbReference type="STRING" id="242231.NGO_0171"/>
<dbReference type="GeneID" id="86929750"/>
<dbReference type="KEGG" id="ngo:NGO_0171"/>
<dbReference type="PATRIC" id="fig|242231.10.peg.215"/>
<dbReference type="HOGENOM" id="CLU_103507_2_1_4"/>
<dbReference type="Proteomes" id="UP000000535">
    <property type="component" value="Chromosome"/>
</dbReference>
<dbReference type="GO" id="GO:0022625">
    <property type="term" value="C:cytosolic large ribosomal subunit"/>
    <property type="evidence" value="ECO:0007669"/>
    <property type="project" value="TreeGrafter"/>
</dbReference>
<dbReference type="GO" id="GO:0003735">
    <property type="term" value="F:structural constituent of ribosome"/>
    <property type="evidence" value="ECO:0007669"/>
    <property type="project" value="InterPro"/>
</dbReference>
<dbReference type="GO" id="GO:0006412">
    <property type="term" value="P:translation"/>
    <property type="evidence" value="ECO:0007669"/>
    <property type="project" value="UniProtKB-UniRule"/>
</dbReference>
<dbReference type="FunFam" id="2.30.30.790:FF:000001">
    <property type="entry name" value="50S ribosomal protein L19"/>
    <property type="match status" value="1"/>
</dbReference>
<dbReference type="Gene3D" id="2.30.30.790">
    <property type="match status" value="1"/>
</dbReference>
<dbReference type="HAMAP" id="MF_00402">
    <property type="entry name" value="Ribosomal_bL19"/>
    <property type="match status" value="1"/>
</dbReference>
<dbReference type="InterPro" id="IPR001857">
    <property type="entry name" value="Ribosomal_bL19"/>
</dbReference>
<dbReference type="InterPro" id="IPR018257">
    <property type="entry name" value="Ribosomal_bL19_CS"/>
</dbReference>
<dbReference type="InterPro" id="IPR038657">
    <property type="entry name" value="Ribosomal_bL19_sf"/>
</dbReference>
<dbReference type="InterPro" id="IPR008991">
    <property type="entry name" value="Translation_prot_SH3-like_sf"/>
</dbReference>
<dbReference type="NCBIfam" id="TIGR01024">
    <property type="entry name" value="rplS_bact"/>
    <property type="match status" value="1"/>
</dbReference>
<dbReference type="PANTHER" id="PTHR15680:SF9">
    <property type="entry name" value="LARGE RIBOSOMAL SUBUNIT PROTEIN BL19M"/>
    <property type="match status" value="1"/>
</dbReference>
<dbReference type="PANTHER" id="PTHR15680">
    <property type="entry name" value="RIBOSOMAL PROTEIN L19"/>
    <property type="match status" value="1"/>
</dbReference>
<dbReference type="Pfam" id="PF01245">
    <property type="entry name" value="Ribosomal_L19"/>
    <property type="match status" value="1"/>
</dbReference>
<dbReference type="PIRSF" id="PIRSF002191">
    <property type="entry name" value="Ribosomal_L19"/>
    <property type="match status" value="1"/>
</dbReference>
<dbReference type="PRINTS" id="PR00061">
    <property type="entry name" value="RIBOSOMALL19"/>
</dbReference>
<dbReference type="SUPFAM" id="SSF50104">
    <property type="entry name" value="Translation proteins SH3-like domain"/>
    <property type="match status" value="1"/>
</dbReference>
<dbReference type="PROSITE" id="PS01015">
    <property type="entry name" value="RIBOSOMAL_L19"/>
    <property type="match status" value="1"/>
</dbReference>
<proteinExistence type="inferred from homology"/>